<evidence type="ECO:0000255" key="1">
    <source>
        <dbReference type="HAMAP-Rule" id="MF_00130"/>
    </source>
</evidence>
<evidence type="ECO:0000256" key="2">
    <source>
        <dbReference type="SAM" id="MobiDB-lite"/>
    </source>
</evidence>
<protein>
    <recommendedName>
        <fullName evidence="1">Holliday junction resolvase RecU</fullName>
        <ecNumber evidence="1">3.1.21.10</ecNumber>
    </recommendedName>
    <alternativeName>
        <fullName evidence="1">Recombination protein U homolog</fullName>
    </alternativeName>
</protein>
<gene>
    <name evidence="1" type="primary">recU</name>
    <name type="ordered locus">BC_1554</name>
</gene>
<accession>Q81FM6</accession>
<proteinExistence type="inferred from homology"/>
<organism>
    <name type="scientific">Bacillus cereus (strain ATCC 14579 / DSM 31 / CCUG 7414 / JCM 2152 / NBRC 15305 / NCIMB 9373 / NCTC 2599 / NRRL B-3711)</name>
    <dbReference type="NCBI Taxonomy" id="226900"/>
    <lineage>
        <taxon>Bacteria</taxon>
        <taxon>Bacillati</taxon>
        <taxon>Bacillota</taxon>
        <taxon>Bacilli</taxon>
        <taxon>Bacillales</taxon>
        <taxon>Bacillaceae</taxon>
        <taxon>Bacillus</taxon>
        <taxon>Bacillus cereus group</taxon>
    </lineage>
</organism>
<keyword id="KW-0963">Cytoplasm</keyword>
<keyword id="KW-0227">DNA damage</keyword>
<keyword id="KW-0233">DNA recombination</keyword>
<keyword id="KW-0234">DNA repair</keyword>
<keyword id="KW-0255">Endonuclease</keyword>
<keyword id="KW-0378">Hydrolase</keyword>
<keyword id="KW-0460">Magnesium</keyword>
<keyword id="KW-0479">Metal-binding</keyword>
<keyword id="KW-0540">Nuclease</keyword>
<keyword id="KW-1185">Reference proteome</keyword>
<name>RECU_BACCR</name>
<feature type="chain" id="PRO_1000016718" description="Holliday junction resolvase RecU">
    <location>
        <begin position="1"/>
        <end position="200"/>
    </location>
</feature>
<feature type="region of interest" description="Disordered" evidence="2">
    <location>
        <begin position="1"/>
        <end position="25"/>
    </location>
</feature>
<feature type="compositionally biased region" description="Polar residues" evidence="2">
    <location>
        <begin position="10"/>
        <end position="25"/>
    </location>
</feature>
<feature type="binding site" evidence="1">
    <location>
        <position position="85"/>
    </location>
    <ligand>
        <name>Mg(2+)</name>
        <dbReference type="ChEBI" id="CHEBI:18420"/>
    </ligand>
</feature>
<feature type="binding site" evidence="1">
    <location>
        <position position="87"/>
    </location>
    <ligand>
        <name>Mg(2+)</name>
        <dbReference type="ChEBI" id="CHEBI:18420"/>
    </ligand>
</feature>
<feature type="binding site" evidence="1">
    <location>
        <position position="100"/>
    </location>
    <ligand>
        <name>Mg(2+)</name>
        <dbReference type="ChEBI" id="CHEBI:18420"/>
    </ligand>
</feature>
<feature type="binding site" evidence="1">
    <location>
        <position position="119"/>
    </location>
    <ligand>
        <name>Mg(2+)</name>
        <dbReference type="ChEBI" id="CHEBI:18420"/>
    </ligand>
</feature>
<feature type="site" description="Transition state stabilizer" evidence="1">
    <location>
        <position position="102"/>
    </location>
</feature>
<comment type="function">
    <text evidence="1">Endonuclease that resolves Holliday junction intermediates in genetic recombination. Cleaves mobile four-strand junctions by introducing symmetrical nicks in paired strands. Promotes annealing of linear ssDNA with homologous dsDNA. Required for DNA repair, homologous recombination and chromosome segregation.</text>
</comment>
<comment type="catalytic activity">
    <reaction evidence="1">
        <text>Endonucleolytic cleavage at a junction such as a reciprocal single-stranded crossover between two homologous DNA duplexes (Holliday junction).</text>
        <dbReference type="EC" id="3.1.21.10"/>
    </reaction>
</comment>
<comment type="cofactor">
    <cofactor evidence="1">
        <name>Mg(2+)</name>
        <dbReference type="ChEBI" id="CHEBI:18420"/>
    </cofactor>
    <text evidence="1">Binds 1 Mg(2+) ion per subunit.</text>
</comment>
<comment type="subcellular location">
    <subcellularLocation>
        <location evidence="1">Cytoplasm</location>
    </subcellularLocation>
</comment>
<comment type="similarity">
    <text evidence="1">Belongs to the RecU family.</text>
</comment>
<reference key="1">
    <citation type="journal article" date="2003" name="Nature">
        <title>Genome sequence of Bacillus cereus and comparative analysis with Bacillus anthracis.</title>
        <authorList>
            <person name="Ivanova N."/>
            <person name="Sorokin A."/>
            <person name="Anderson I."/>
            <person name="Galleron N."/>
            <person name="Candelon B."/>
            <person name="Kapatral V."/>
            <person name="Bhattacharyya A."/>
            <person name="Reznik G."/>
            <person name="Mikhailova N."/>
            <person name="Lapidus A."/>
            <person name="Chu L."/>
            <person name="Mazur M."/>
            <person name="Goltsman E."/>
            <person name="Larsen N."/>
            <person name="D'Souza M."/>
            <person name="Walunas T."/>
            <person name="Grechkin Y."/>
            <person name="Pusch G."/>
            <person name="Haselkorn R."/>
            <person name="Fonstein M."/>
            <person name="Ehrlich S.D."/>
            <person name="Overbeek R."/>
            <person name="Kyrpides N.C."/>
        </authorList>
    </citation>
    <scope>NUCLEOTIDE SEQUENCE [LARGE SCALE GENOMIC DNA]</scope>
    <source>
        <strain>ATCC 14579 / DSM 31 / CCUG 7414 / JCM 2152 / NBRC 15305 / NCIMB 9373 / NCTC 2599 / NRRL B-3711</strain>
    </source>
</reference>
<sequence>MTIRYPNGKRYNQASQPQKTPIKTHTYSNRGMSLEEELNETNQYYLTHNIACVHKKPTPLQIVKVDYPARSAAVVKEAYFKQPSTTDYNGVYKGKYIDFEAKETKNKTSFPLQNFHLHQIEHMKQVVAHNGIAFVIIKFTLFDEFYLLDAKHIIAFWNRQNTGGRKSITKEEIEEHGSLLSCGYHPRIDYIRVLDMVYFS</sequence>
<dbReference type="EC" id="3.1.21.10" evidence="1"/>
<dbReference type="EMBL" id="AE016877">
    <property type="protein sequence ID" value="AAP08533.1"/>
    <property type="molecule type" value="Genomic_DNA"/>
</dbReference>
<dbReference type="RefSeq" id="NP_831332.1">
    <property type="nucleotide sequence ID" value="NC_004722.1"/>
</dbReference>
<dbReference type="RefSeq" id="WP_000155598.1">
    <property type="nucleotide sequence ID" value="NZ_CP138336.1"/>
</dbReference>
<dbReference type="SMR" id="Q81FM6"/>
<dbReference type="STRING" id="226900.BC_1554"/>
<dbReference type="KEGG" id="bce:BC1554"/>
<dbReference type="PATRIC" id="fig|226900.8.peg.1531"/>
<dbReference type="HOGENOM" id="CLU_096340_0_0_9"/>
<dbReference type="OrthoDB" id="9783592at2"/>
<dbReference type="Proteomes" id="UP000001417">
    <property type="component" value="Chromosome"/>
</dbReference>
<dbReference type="GO" id="GO:0005737">
    <property type="term" value="C:cytoplasm"/>
    <property type="evidence" value="ECO:0007669"/>
    <property type="project" value="UniProtKB-SubCell"/>
</dbReference>
<dbReference type="GO" id="GO:0004519">
    <property type="term" value="F:endonuclease activity"/>
    <property type="evidence" value="ECO:0007669"/>
    <property type="project" value="UniProtKB-UniRule"/>
</dbReference>
<dbReference type="GO" id="GO:0000287">
    <property type="term" value="F:magnesium ion binding"/>
    <property type="evidence" value="ECO:0007669"/>
    <property type="project" value="UniProtKB-UniRule"/>
</dbReference>
<dbReference type="GO" id="GO:0003676">
    <property type="term" value="F:nucleic acid binding"/>
    <property type="evidence" value="ECO:0007669"/>
    <property type="project" value="InterPro"/>
</dbReference>
<dbReference type="GO" id="GO:0007059">
    <property type="term" value="P:chromosome segregation"/>
    <property type="evidence" value="ECO:0007669"/>
    <property type="project" value="UniProtKB-UniRule"/>
</dbReference>
<dbReference type="GO" id="GO:0006310">
    <property type="term" value="P:DNA recombination"/>
    <property type="evidence" value="ECO:0007669"/>
    <property type="project" value="UniProtKB-UniRule"/>
</dbReference>
<dbReference type="GO" id="GO:0006281">
    <property type="term" value="P:DNA repair"/>
    <property type="evidence" value="ECO:0007669"/>
    <property type="project" value="UniProtKB-UniRule"/>
</dbReference>
<dbReference type="CDD" id="cd22354">
    <property type="entry name" value="RecU-like"/>
    <property type="match status" value="1"/>
</dbReference>
<dbReference type="Gene3D" id="3.40.1350.10">
    <property type="match status" value="1"/>
</dbReference>
<dbReference type="HAMAP" id="MF_00130">
    <property type="entry name" value="RecU"/>
    <property type="match status" value="1"/>
</dbReference>
<dbReference type="InterPro" id="IPR004612">
    <property type="entry name" value="Resolv_RecU"/>
</dbReference>
<dbReference type="InterPro" id="IPR011335">
    <property type="entry name" value="Restrct_endonuc-II-like"/>
</dbReference>
<dbReference type="InterPro" id="IPR011856">
    <property type="entry name" value="tRNA_endonuc-like_dom_sf"/>
</dbReference>
<dbReference type="NCBIfam" id="NF002581">
    <property type="entry name" value="PRK02234.1-2"/>
    <property type="match status" value="1"/>
</dbReference>
<dbReference type="NCBIfam" id="NF002584">
    <property type="entry name" value="PRK02234.1-5"/>
    <property type="match status" value="1"/>
</dbReference>
<dbReference type="NCBIfam" id="NF002585">
    <property type="entry name" value="PRK02234.1-6"/>
    <property type="match status" value="1"/>
</dbReference>
<dbReference type="NCBIfam" id="TIGR00648">
    <property type="entry name" value="recU"/>
    <property type="match status" value="1"/>
</dbReference>
<dbReference type="Pfam" id="PF03838">
    <property type="entry name" value="RecU"/>
    <property type="match status" value="1"/>
</dbReference>
<dbReference type="PIRSF" id="PIRSF037785">
    <property type="entry name" value="RecU"/>
    <property type="match status" value="1"/>
</dbReference>
<dbReference type="SUPFAM" id="SSF52980">
    <property type="entry name" value="Restriction endonuclease-like"/>
    <property type="match status" value="1"/>
</dbReference>